<comment type="function">
    <text evidence="1">Putative 5'-&gt;3' double-stranded DNA exonuclease which may also contain a cryptic 3'-&gt;5' double-stranded DNA exonuclease activity. May be involved in DNA mismatch repair (MMR) (By similarity).</text>
</comment>
<comment type="cofactor">
    <cofactor evidence="1">
        <name>Mg(2+)</name>
        <dbReference type="ChEBI" id="CHEBI:18420"/>
    </cofactor>
    <text evidence="1">Binds 2 magnesium ions per subunit. They probably participate in the reaction catalyzed by the enzyme. May bind an additional third magnesium ion after substrate binding.</text>
</comment>
<comment type="subcellular location">
    <subcellularLocation>
        <location evidence="1">Nucleus</location>
    </subcellularLocation>
</comment>
<comment type="alternative products">
    <event type="alternative splicing"/>
    <isoform>
        <id>Q8L6Z7-1</id>
        <name>1</name>
        <sequence type="displayed"/>
    </isoform>
    <isoform>
        <id>Q8L6Z7-2</id>
        <name>2</name>
        <sequence type="described" ref="VSP_030585"/>
    </isoform>
</comment>
<comment type="similarity">
    <text evidence="4">Belongs to the XPG/RAD2 endonuclease family. EXO1 subfamily.</text>
</comment>
<comment type="sequence caution" evidence="4">
    <conflict type="erroneous gene model prediction">
        <sequence resource="EMBL-CDS" id="AAG51751"/>
    </conflict>
</comment>
<keyword id="KW-0025">Alternative splicing</keyword>
<keyword id="KW-0227">DNA damage</keyword>
<keyword id="KW-0228">DNA excision</keyword>
<keyword id="KW-0234">DNA repair</keyword>
<keyword id="KW-0238">DNA-binding</keyword>
<keyword id="KW-0255">Endonuclease</keyword>
<keyword id="KW-0267">Excision nuclease</keyword>
<keyword id="KW-0269">Exonuclease</keyword>
<keyword id="KW-0378">Hydrolase</keyword>
<keyword id="KW-0460">Magnesium</keyword>
<keyword id="KW-0479">Metal-binding</keyword>
<keyword id="KW-0540">Nuclease</keyword>
<keyword id="KW-0539">Nucleus</keyword>
<keyword id="KW-1185">Reference proteome</keyword>
<protein>
    <recommendedName>
        <fullName>Exonuclease 1</fullName>
        <ecNumber>3.1.-.-</ecNumber>
    </recommendedName>
</protein>
<sequence length="735" mass="82249">MGIQGLLPLLKSIMVPIHIKELEGCIVAVDTYSWLHKGALSCSRELCKGLPTKRHIQYCMHRVNLLRHHGVKPIMVFDGGPLPMKLEQENKRARSRKENLARALEHEANGNSSAAYECYSKAVDISPSIAHELIQVLRQENVDYVVAPYEADAQMAFLAITKQVDAIITEDSDLIPFGCLRIIFKMDKFGHGVEFQASKLPKNKDLSLSGFSSQMLLEMCILSGCDYLQSLPGMGLKRAHALITKFKSYDRVIKHLKYSTVSVPPLYEESFKRALLTFKHQRVYDPNAEDIIHLCDISDNLGEDSDFVGPSMPQDIAKGIALGQLDPFTQLPFQAESVTPKLAVDDISRPKSFKPETVKKKLDLPVQKNLLTKYFCFASVEAKRKFKAPRISPMSLTPTDESPSIPDDNTPDLDALSSQTTNESPVYSLGENPCVSEVAEKRDSPDDDAVERNHKDLHHKYCEREVDRPKSDSLKVIVRSKYFKQKQEDKSLKQSIPCLNDCSVIGQRKAVKTVINMSSASKREESHRAIATSPCLHHDRIYNDHEDAKEASFSAMNEVAERTINTHKINHQINEEEQNPSVEIPSAFSTPENVIPLSSIAIDSCHGVATGKRKLDSDENLHKENLKSKHMRMDETDTALNAETPLETDDVEKFGSNISHIGHYSEIAEKSVERFVSAISSFKYSGTGSRASGLRAPLKDIRNTCPSKGLSLKPDISKFGYASSNRHMVTKSRRM</sequence>
<dbReference type="EC" id="3.1.-.-"/>
<dbReference type="EMBL" id="AC068667">
    <property type="protein sequence ID" value="AAG51751.1"/>
    <property type="status" value="ALT_SEQ"/>
    <property type="molecule type" value="Genomic_DNA"/>
</dbReference>
<dbReference type="EMBL" id="CP002684">
    <property type="protein sequence ID" value="AEE31111.1"/>
    <property type="molecule type" value="Genomic_DNA"/>
</dbReference>
<dbReference type="EMBL" id="CP002684">
    <property type="protein sequence ID" value="AEE31112.1"/>
    <property type="molecule type" value="Genomic_DNA"/>
</dbReference>
<dbReference type="EMBL" id="AY140055">
    <property type="protein sequence ID" value="AAM98196.1"/>
    <property type="molecule type" value="mRNA"/>
</dbReference>
<dbReference type="PIR" id="E86419">
    <property type="entry name" value="E86419"/>
</dbReference>
<dbReference type="RefSeq" id="NP_001077624.1">
    <molecule id="Q8L6Z7-1"/>
    <property type="nucleotide sequence ID" value="NM_001084155.2"/>
</dbReference>
<dbReference type="RefSeq" id="NP_174256.2">
    <molecule id="Q8L6Z7-2"/>
    <property type="nucleotide sequence ID" value="NM_102703.5"/>
</dbReference>
<dbReference type="SMR" id="Q8L6Z7"/>
<dbReference type="BioGRID" id="25075">
    <property type="interactions" value="3"/>
</dbReference>
<dbReference type="FunCoup" id="Q8L6Z7">
    <property type="interactions" value="152"/>
</dbReference>
<dbReference type="STRING" id="3702.Q8L6Z7"/>
<dbReference type="PaxDb" id="3702-AT1G29630.2"/>
<dbReference type="ProteomicsDB" id="222237">
    <molecule id="Q8L6Z7-1"/>
</dbReference>
<dbReference type="EnsemblPlants" id="AT1G29630.1">
    <molecule id="Q8L6Z7-2"/>
    <property type="protein sequence ID" value="AT1G29630.1"/>
    <property type="gene ID" value="AT1G29630"/>
</dbReference>
<dbReference type="EnsemblPlants" id="AT1G29630.2">
    <molecule id="Q8L6Z7-1"/>
    <property type="protein sequence ID" value="AT1G29630.2"/>
    <property type="gene ID" value="AT1G29630"/>
</dbReference>
<dbReference type="GeneID" id="839840"/>
<dbReference type="Gramene" id="AT1G29630.1">
    <molecule id="Q8L6Z7-2"/>
    <property type="protein sequence ID" value="AT1G29630.1"/>
    <property type="gene ID" value="AT1G29630"/>
</dbReference>
<dbReference type="Gramene" id="AT1G29630.2">
    <molecule id="Q8L6Z7-1"/>
    <property type="protein sequence ID" value="AT1G29630.2"/>
    <property type="gene ID" value="AT1G29630"/>
</dbReference>
<dbReference type="KEGG" id="ath:AT1G29630"/>
<dbReference type="Araport" id="AT1G29630"/>
<dbReference type="TAIR" id="AT1G29630"/>
<dbReference type="eggNOG" id="KOG2518">
    <property type="taxonomic scope" value="Eukaryota"/>
</dbReference>
<dbReference type="HOGENOM" id="CLU_008978_4_0_1"/>
<dbReference type="InParanoid" id="Q8L6Z7"/>
<dbReference type="PhylomeDB" id="Q8L6Z7"/>
<dbReference type="PRO" id="PR:Q8L6Z7"/>
<dbReference type="Proteomes" id="UP000006548">
    <property type="component" value="Chromosome 1"/>
</dbReference>
<dbReference type="ExpressionAtlas" id="Q8L6Z7">
    <property type="expression patterns" value="baseline and differential"/>
</dbReference>
<dbReference type="GO" id="GO:0005634">
    <property type="term" value="C:nucleus"/>
    <property type="evidence" value="ECO:0007669"/>
    <property type="project" value="UniProtKB-SubCell"/>
</dbReference>
<dbReference type="GO" id="GO:0035312">
    <property type="term" value="F:5'-3' DNA exonuclease activity"/>
    <property type="evidence" value="ECO:0007669"/>
    <property type="project" value="InterPro"/>
</dbReference>
<dbReference type="GO" id="GO:0003677">
    <property type="term" value="F:DNA binding"/>
    <property type="evidence" value="ECO:0007669"/>
    <property type="project" value="UniProtKB-KW"/>
</dbReference>
<dbReference type="GO" id="GO:0004519">
    <property type="term" value="F:endonuclease activity"/>
    <property type="evidence" value="ECO:0007669"/>
    <property type="project" value="UniProtKB-KW"/>
</dbReference>
<dbReference type="GO" id="GO:0046872">
    <property type="term" value="F:metal ion binding"/>
    <property type="evidence" value="ECO:0007669"/>
    <property type="project" value="UniProtKB-KW"/>
</dbReference>
<dbReference type="GO" id="GO:0032183">
    <property type="term" value="F:SUMO binding"/>
    <property type="evidence" value="ECO:0000353"/>
    <property type="project" value="TAIR"/>
</dbReference>
<dbReference type="GO" id="GO:0006281">
    <property type="term" value="P:DNA repair"/>
    <property type="evidence" value="ECO:0007669"/>
    <property type="project" value="UniProtKB-KW"/>
</dbReference>
<dbReference type="CDD" id="cd09908">
    <property type="entry name" value="H3TH_EXO1"/>
    <property type="match status" value="1"/>
</dbReference>
<dbReference type="CDD" id="cd09857">
    <property type="entry name" value="PIN_EXO1"/>
    <property type="match status" value="1"/>
</dbReference>
<dbReference type="FunFam" id="1.10.150.20:FF:000011">
    <property type="entry name" value="exonuclease 1"/>
    <property type="match status" value="1"/>
</dbReference>
<dbReference type="FunFam" id="3.40.50.1010:FF:000002">
    <property type="entry name" value="Exonuclease 1, putative"/>
    <property type="match status" value="1"/>
</dbReference>
<dbReference type="Gene3D" id="1.10.150.20">
    <property type="entry name" value="5' to 3' exonuclease, C-terminal subdomain"/>
    <property type="match status" value="1"/>
</dbReference>
<dbReference type="Gene3D" id="3.40.50.1010">
    <property type="entry name" value="5'-nuclease"/>
    <property type="match status" value="1"/>
</dbReference>
<dbReference type="InterPro" id="IPR036279">
    <property type="entry name" value="5-3_exonuclease_C_sf"/>
</dbReference>
<dbReference type="InterPro" id="IPR037315">
    <property type="entry name" value="EXO1_H3TH"/>
</dbReference>
<dbReference type="InterPro" id="IPR008918">
    <property type="entry name" value="HhH2"/>
</dbReference>
<dbReference type="InterPro" id="IPR029060">
    <property type="entry name" value="PIN-like_dom_sf"/>
</dbReference>
<dbReference type="InterPro" id="IPR044752">
    <property type="entry name" value="PIN-like_EXO1"/>
</dbReference>
<dbReference type="InterPro" id="IPR006086">
    <property type="entry name" value="XPG-I_dom"/>
</dbReference>
<dbReference type="InterPro" id="IPR006084">
    <property type="entry name" value="XPG/Rad2"/>
</dbReference>
<dbReference type="InterPro" id="IPR019974">
    <property type="entry name" value="XPG_CS"/>
</dbReference>
<dbReference type="InterPro" id="IPR006085">
    <property type="entry name" value="XPG_DNA_repair_N"/>
</dbReference>
<dbReference type="PANTHER" id="PTHR11081:SF65">
    <property type="entry name" value="DNA DAMAGE-INDUCIBLE PROTEIN DIN7-RELATED"/>
    <property type="match status" value="1"/>
</dbReference>
<dbReference type="PANTHER" id="PTHR11081">
    <property type="entry name" value="FLAP ENDONUCLEASE FAMILY MEMBER"/>
    <property type="match status" value="1"/>
</dbReference>
<dbReference type="Pfam" id="PF00867">
    <property type="entry name" value="XPG_I"/>
    <property type="match status" value="1"/>
</dbReference>
<dbReference type="Pfam" id="PF00752">
    <property type="entry name" value="XPG_N"/>
    <property type="match status" value="1"/>
</dbReference>
<dbReference type="PRINTS" id="PR00853">
    <property type="entry name" value="XPGRADSUPER"/>
</dbReference>
<dbReference type="SMART" id="SM00279">
    <property type="entry name" value="HhH2"/>
    <property type="match status" value="1"/>
</dbReference>
<dbReference type="SMART" id="SM00484">
    <property type="entry name" value="XPGI"/>
    <property type="match status" value="1"/>
</dbReference>
<dbReference type="SMART" id="SM00485">
    <property type="entry name" value="XPGN"/>
    <property type="match status" value="1"/>
</dbReference>
<dbReference type="SUPFAM" id="SSF47807">
    <property type="entry name" value="5' to 3' exonuclease, C-terminal subdomain"/>
    <property type="match status" value="1"/>
</dbReference>
<dbReference type="SUPFAM" id="SSF88723">
    <property type="entry name" value="PIN domain-like"/>
    <property type="match status" value="1"/>
</dbReference>
<dbReference type="PROSITE" id="PS00842">
    <property type="entry name" value="XPG_2"/>
    <property type="match status" value="1"/>
</dbReference>
<feature type="chain" id="PRO_0000315620" description="Exonuclease 1">
    <location>
        <begin position="1"/>
        <end position="735"/>
    </location>
</feature>
<feature type="region of interest" description="N-domain">
    <location>
        <begin position="1"/>
        <end position="99"/>
    </location>
</feature>
<feature type="region of interest" description="I-domain">
    <location>
        <begin position="138"/>
        <end position="230"/>
    </location>
</feature>
<feature type="region of interest" description="Disordered" evidence="2">
    <location>
        <begin position="391"/>
        <end position="456"/>
    </location>
</feature>
<feature type="compositionally biased region" description="Polar residues" evidence="2">
    <location>
        <begin position="416"/>
        <end position="425"/>
    </location>
</feature>
<feature type="compositionally biased region" description="Basic and acidic residues" evidence="2">
    <location>
        <begin position="438"/>
        <end position="456"/>
    </location>
</feature>
<feature type="binding site" evidence="1">
    <location>
        <position position="30"/>
    </location>
    <ligand>
        <name>Mg(2+)</name>
        <dbReference type="ChEBI" id="CHEBI:18420"/>
        <label>1</label>
    </ligand>
</feature>
<feature type="binding site" evidence="1">
    <location>
        <position position="78"/>
    </location>
    <ligand>
        <name>Mg(2+)</name>
        <dbReference type="ChEBI" id="CHEBI:18420"/>
        <label>1</label>
    </ligand>
</feature>
<feature type="binding site" evidence="1">
    <location>
        <position position="150"/>
    </location>
    <ligand>
        <name>Mg(2+)</name>
        <dbReference type="ChEBI" id="CHEBI:18420"/>
        <label>1</label>
    </ligand>
</feature>
<feature type="binding site" evidence="1">
    <location>
        <position position="152"/>
    </location>
    <ligand>
        <name>Mg(2+)</name>
        <dbReference type="ChEBI" id="CHEBI:18420"/>
        <label>1</label>
    </ligand>
</feature>
<feature type="binding site" evidence="1">
    <location>
        <position position="171"/>
    </location>
    <ligand>
        <name>Mg(2+)</name>
        <dbReference type="ChEBI" id="CHEBI:18420"/>
        <label>2</label>
    </ligand>
</feature>
<feature type="binding site" evidence="1">
    <location>
        <position position="173"/>
    </location>
    <ligand>
        <name>Mg(2+)</name>
        <dbReference type="ChEBI" id="CHEBI:18420"/>
        <label>2</label>
    </ligand>
</feature>
<feature type="binding site" evidence="1">
    <location>
        <position position="226"/>
    </location>
    <ligand>
        <name>Mg(2+)</name>
        <dbReference type="ChEBI" id="CHEBI:18420"/>
        <label>2</label>
    </ligand>
</feature>
<feature type="splice variant" id="VSP_030585" description="In isoform 2." evidence="3">
    <location>
        <begin position="182"/>
        <end position="251"/>
    </location>
</feature>
<feature type="sequence conflict" description="In Ref. 3; AAM98196." evidence="4" ref="3">
    <original>F</original>
    <variation>L</variation>
    <location>
        <position position="377"/>
    </location>
</feature>
<name>EXO1_ARATH</name>
<gene>
    <name type="primary">EXO1</name>
    <name type="ordered locus">At1g29630</name>
    <name type="ORF">F15D2.37</name>
</gene>
<accession>Q8L6Z7</accession>
<accession>Q9C7N8</accession>
<proteinExistence type="evidence at transcript level"/>
<organism>
    <name type="scientific">Arabidopsis thaliana</name>
    <name type="common">Mouse-ear cress</name>
    <dbReference type="NCBI Taxonomy" id="3702"/>
    <lineage>
        <taxon>Eukaryota</taxon>
        <taxon>Viridiplantae</taxon>
        <taxon>Streptophyta</taxon>
        <taxon>Embryophyta</taxon>
        <taxon>Tracheophyta</taxon>
        <taxon>Spermatophyta</taxon>
        <taxon>Magnoliopsida</taxon>
        <taxon>eudicotyledons</taxon>
        <taxon>Gunneridae</taxon>
        <taxon>Pentapetalae</taxon>
        <taxon>rosids</taxon>
        <taxon>malvids</taxon>
        <taxon>Brassicales</taxon>
        <taxon>Brassicaceae</taxon>
        <taxon>Camelineae</taxon>
        <taxon>Arabidopsis</taxon>
    </lineage>
</organism>
<evidence type="ECO:0000250" key="1"/>
<evidence type="ECO:0000256" key="2">
    <source>
        <dbReference type="SAM" id="MobiDB-lite"/>
    </source>
</evidence>
<evidence type="ECO:0000303" key="3">
    <source>
    </source>
</evidence>
<evidence type="ECO:0000305" key="4"/>
<reference key="1">
    <citation type="journal article" date="2000" name="Nature">
        <title>Sequence and analysis of chromosome 1 of the plant Arabidopsis thaliana.</title>
        <authorList>
            <person name="Theologis A."/>
            <person name="Ecker J.R."/>
            <person name="Palm C.J."/>
            <person name="Federspiel N.A."/>
            <person name="Kaul S."/>
            <person name="White O."/>
            <person name="Alonso J."/>
            <person name="Altafi H."/>
            <person name="Araujo R."/>
            <person name="Bowman C.L."/>
            <person name="Brooks S.Y."/>
            <person name="Buehler E."/>
            <person name="Chan A."/>
            <person name="Chao Q."/>
            <person name="Chen H."/>
            <person name="Cheuk R.F."/>
            <person name="Chin C.W."/>
            <person name="Chung M.K."/>
            <person name="Conn L."/>
            <person name="Conway A.B."/>
            <person name="Conway A.R."/>
            <person name="Creasy T.H."/>
            <person name="Dewar K."/>
            <person name="Dunn P."/>
            <person name="Etgu P."/>
            <person name="Feldblyum T.V."/>
            <person name="Feng J.-D."/>
            <person name="Fong B."/>
            <person name="Fujii C.Y."/>
            <person name="Gill J.E."/>
            <person name="Goldsmith A.D."/>
            <person name="Haas B."/>
            <person name="Hansen N.F."/>
            <person name="Hughes B."/>
            <person name="Huizar L."/>
            <person name="Hunter J.L."/>
            <person name="Jenkins J."/>
            <person name="Johnson-Hopson C."/>
            <person name="Khan S."/>
            <person name="Khaykin E."/>
            <person name="Kim C.J."/>
            <person name="Koo H.L."/>
            <person name="Kremenetskaia I."/>
            <person name="Kurtz D.B."/>
            <person name="Kwan A."/>
            <person name="Lam B."/>
            <person name="Langin-Hooper S."/>
            <person name="Lee A."/>
            <person name="Lee J.M."/>
            <person name="Lenz C.A."/>
            <person name="Li J.H."/>
            <person name="Li Y.-P."/>
            <person name="Lin X."/>
            <person name="Liu S.X."/>
            <person name="Liu Z.A."/>
            <person name="Luros J.S."/>
            <person name="Maiti R."/>
            <person name="Marziali A."/>
            <person name="Militscher J."/>
            <person name="Miranda M."/>
            <person name="Nguyen M."/>
            <person name="Nierman W.C."/>
            <person name="Osborne B.I."/>
            <person name="Pai G."/>
            <person name="Peterson J."/>
            <person name="Pham P.K."/>
            <person name="Rizzo M."/>
            <person name="Rooney T."/>
            <person name="Rowley D."/>
            <person name="Sakano H."/>
            <person name="Salzberg S.L."/>
            <person name="Schwartz J.R."/>
            <person name="Shinn P."/>
            <person name="Southwick A.M."/>
            <person name="Sun H."/>
            <person name="Tallon L.J."/>
            <person name="Tambunga G."/>
            <person name="Toriumi M.J."/>
            <person name="Town C.D."/>
            <person name="Utterback T."/>
            <person name="Van Aken S."/>
            <person name="Vaysberg M."/>
            <person name="Vysotskaia V.S."/>
            <person name="Walker M."/>
            <person name="Wu D."/>
            <person name="Yu G."/>
            <person name="Fraser C.M."/>
            <person name="Venter J.C."/>
            <person name="Davis R.W."/>
        </authorList>
    </citation>
    <scope>NUCLEOTIDE SEQUENCE [LARGE SCALE GENOMIC DNA]</scope>
    <source>
        <strain>cv. Columbia</strain>
    </source>
</reference>
<reference key="2">
    <citation type="journal article" date="2017" name="Plant J.">
        <title>Araport11: a complete reannotation of the Arabidopsis thaliana reference genome.</title>
        <authorList>
            <person name="Cheng C.Y."/>
            <person name="Krishnakumar V."/>
            <person name="Chan A.P."/>
            <person name="Thibaud-Nissen F."/>
            <person name="Schobel S."/>
            <person name="Town C.D."/>
        </authorList>
    </citation>
    <scope>GENOME REANNOTATION</scope>
    <source>
        <strain>cv. Columbia</strain>
    </source>
</reference>
<reference key="3">
    <citation type="journal article" date="2003" name="Science">
        <title>Empirical analysis of transcriptional activity in the Arabidopsis genome.</title>
        <authorList>
            <person name="Yamada K."/>
            <person name="Lim J."/>
            <person name="Dale J.M."/>
            <person name="Chen H."/>
            <person name="Shinn P."/>
            <person name="Palm C.J."/>
            <person name="Southwick A.M."/>
            <person name="Wu H.C."/>
            <person name="Kim C.J."/>
            <person name="Nguyen M."/>
            <person name="Pham P.K."/>
            <person name="Cheuk R.F."/>
            <person name="Karlin-Newmann G."/>
            <person name="Liu S.X."/>
            <person name="Lam B."/>
            <person name="Sakano H."/>
            <person name="Wu T."/>
            <person name="Yu G."/>
            <person name="Miranda M."/>
            <person name="Quach H.L."/>
            <person name="Tripp M."/>
            <person name="Chang C.H."/>
            <person name="Lee J.M."/>
            <person name="Toriumi M.J."/>
            <person name="Chan M.M."/>
            <person name="Tang C.C."/>
            <person name="Onodera C.S."/>
            <person name="Deng J.M."/>
            <person name="Akiyama K."/>
            <person name="Ansari Y."/>
            <person name="Arakawa T."/>
            <person name="Banh J."/>
            <person name="Banno F."/>
            <person name="Bowser L."/>
            <person name="Brooks S.Y."/>
            <person name="Carninci P."/>
            <person name="Chao Q."/>
            <person name="Choy N."/>
            <person name="Enju A."/>
            <person name="Goldsmith A.D."/>
            <person name="Gurjal M."/>
            <person name="Hansen N.F."/>
            <person name="Hayashizaki Y."/>
            <person name="Johnson-Hopson C."/>
            <person name="Hsuan V.W."/>
            <person name="Iida K."/>
            <person name="Karnes M."/>
            <person name="Khan S."/>
            <person name="Koesema E."/>
            <person name="Ishida J."/>
            <person name="Jiang P.X."/>
            <person name="Jones T."/>
            <person name="Kawai J."/>
            <person name="Kamiya A."/>
            <person name="Meyers C."/>
            <person name="Nakajima M."/>
            <person name="Narusaka M."/>
            <person name="Seki M."/>
            <person name="Sakurai T."/>
            <person name="Satou M."/>
            <person name="Tamse R."/>
            <person name="Vaysberg M."/>
            <person name="Wallender E.K."/>
            <person name="Wong C."/>
            <person name="Yamamura Y."/>
            <person name="Yuan S."/>
            <person name="Shinozaki K."/>
            <person name="Davis R.W."/>
            <person name="Theologis A."/>
            <person name="Ecker J.R."/>
        </authorList>
    </citation>
    <scope>NUCLEOTIDE SEQUENCE [LARGE SCALE MRNA] (ISOFORM 2)</scope>
    <source>
        <strain>cv. Columbia</strain>
    </source>
</reference>